<dbReference type="EMBL" id="CR382138">
    <property type="protein sequence ID" value="CAG88701.1"/>
    <property type="molecule type" value="Genomic_DNA"/>
</dbReference>
<dbReference type="RefSeq" id="XP_460397.1">
    <property type="nucleotide sequence ID" value="XM_460397.1"/>
</dbReference>
<dbReference type="SMR" id="Q6BN23"/>
<dbReference type="FunCoup" id="Q6BN23">
    <property type="interactions" value="549"/>
</dbReference>
<dbReference type="STRING" id="284592.Q6BN23"/>
<dbReference type="GeneID" id="2903792"/>
<dbReference type="KEGG" id="dha:DEHA2F00836g"/>
<dbReference type="VEuPathDB" id="FungiDB:DEHA2F00836g"/>
<dbReference type="eggNOG" id="KOG3489">
    <property type="taxonomic scope" value="Eukaryota"/>
</dbReference>
<dbReference type="HOGENOM" id="CLU_141397_1_0_1"/>
<dbReference type="InParanoid" id="Q6BN23"/>
<dbReference type="OMA" id="NEICWDK"/>
<dbReference type="OrthoDB" id="344165at2759"/>
<dbReference type="Proteomes" id="UP000000599">
    <property type="component" value="Chromosome F"/>
</dbReference>
<dbReference type="GO" id="GO:0005743">
    <property type="term" value="C:mitochondrial inner membrane"/>
    <property type="evidence" value="ECO:0007669"/>
    <property type="project" value="UniProtKB-SubCell"/>
</dbReference>
<dbReference type="GO" id="GO:0042719">
    <property type="term" value="C:mitochondrial intermembrane space protein transporter complex"/>
    <property type="evidence" value="ECO:0007669"/>
    <property type="project" value="EnsemblFungi"/>
</dbReference>
<dbReference type="GO" id="GO:0046872">
    <property type="term" value="F:metal ion binding"/>
    <property type="evidence" value="ECO:0007669"/>
    <property type="project" value="UniProtKB-KW"/>
</dbReference>
<dbReference type="GO" id="GO:0140318">
    <property type="term" value="F:protein transporter activity"/>
    <property type="evidence" value="ECO:0007669"/>
    <property type="project" value="EnsemblFungi"/>
</dbReference>
<dbReference type="GO" id="GO:0045039">
    <property type="term" value="P:protein insertion into mitochondrial inner membrane"/>
    <property type="evidence" value="ECO:0007669"/>
    <property type="project" value="EnsemblFungi"/>
</dbReference>
<dbReference type="Gene3D" id="1.10.287.810">
    <property type="entry name" value="Mitochondrial import inner membrane translocase subunit tim13 like domains"/>
    <property type="match status" value="1"/>
</dbReference>
<dbReference type="InterPro" id="IPR004217">
    <property type="entry name" value="Tim10-like"/>
</dbReference>
<dbReference type="InterPro" id="IPR035427">
    <property type="entry name" value="Tim10-like_dom_sf"/>
</dbReference>
<dbReference type="Pfam" id="PF02953">
    <property type="entry name" value="zf-Tim10_DDP"/>
    <property type="match status" value="1"/>
</dbReference>
<dbReference type="SUPFAM" id="SSF144122">
    <property type="entry name" value="Tim10-like"/>
    <property type="match status" value="1"/>
</dbReference>
<evidence type="ECO:0000250" key="1"/>
<evidence type="ECO:0000305" key="2"/>
<keyword id="KW-0143">Chaperone</keyword>
<keyword id="KW-1015">Disulfide bond</keyword>
<keyword id="KW-0472">Membrane</keyword>
<keyword id="KW-0479">Metal-binding</keyword>
<keyword id="KW-0496">Mitochondrion</keyword>
<keyword id="KW-0999">Mitochondrion inner membrane</keyword>
<keyword id="KW-0653">Protein transport</keyword>
<keyword id="KW-1185">Reference proteome</keyword>
<keyword id="KW-0811">Translocation</keyword>
<keyword id="KW-0813">Transport</keyword>
<keyword id="KW-0862">Zinc</keyword>
<organism>
    <name type="scientific">Debaryomyces hansenii (strain ATCC 36239 / CBS 767 / BCRC 21394 / JCM 1990 / NBRC 0083 / IGC 2968)</name>
    <name type="common">Yeast</name>
    <name type="synonym">Torulaspora hansenii</name>
    <dbReference type="NCBI Taxonomy" id="284592"/>
    <lineage>
        <taxon>Eukaryota</taxon>
        <taxon>Fungi</taxon>
        <taxon>Dikarya</taxon>
        <taxon>Ascomycota</taxon>
        <taxon>Saccharomycotina</taxon>
        <taxon>Pichiomycetes</taxon>
        <taxon>Debaryomycetaceae</taxon>
        <taxon>Debaryomyces</taxon>
    </lineage>
</organism>
<gene>
    <name type="primary">TIM8</name>
    <name type="ordered locus">DEHA2F00836g</name>
</gene>
<feature type="chain" id="PRO_0000228032" description="Mitochondrial import inner membrane translocase subunit TIM8">
    <location>
        <begin position="1"/>
        <end position="90"/>
    </location>
</feature>
<feature type="short sequence motif" description="Twin CX3C motif">
    <location>
        <begin position="44"/>
        <end position="70"/>
    </location>
</feature>
<feature type="disulfide bond" evidence="1">
    <location>
        <begin position="44"/>
        <end position="70"/>
    </location>
</feature>
<feature type="disulfide bond" evidence="1">
    <location>
        <begin position="48"/>
        <end position="66"/>
    </location>
</feature>
<comment type="function">
    <text evidence="1">Mitochondrial intermembrane chaperone that participates in the import and insertion of some multi-pass transmembrane proteins into the mitochondrial inner membrane. Also required for the transfer of beta-barrel precursors from the TOM complex to the sorting and assembly machinery (SAM complex) of the outer membrane. Acts as a chaperone-like protein that protects the hydrophobic precursors from aggregation and guide them through the mitochondrial intermembrane space. The TIM8-TIM13 complex is non essential and only mediates the import of few proteins, while the predominant TIM9-TIM10 70 kDa complex is crucial and mediates the import of much more proteins (By similarity).</text>
</comment>
<comment type="subunit">
    <text evidence="1">Heterohexamer; composed of 3 copies of TIM8 and 3 copies of TIM13, named soluble 70 kDa complex. Associates with the TIM22 complex, whose core is composed of TIM22 and TIM54. Interacts with the transmembrane regions of multi-pass transmembrane proteins in transit (By similarity).</text>
</comment>
<comment type="subcellular location">
    <subcellularLocation>
        <location evidence="1">Mitochondrion inner membrane</location>
        <topology evidence="1">Peripheral membrane protein</topology>
        <orientation evidence="1">Intermembrane side</orientation>
    </subcellularLocation>
</comment>
<comment type="domain">
    <text evidence="1">The twin CX3C motif contains 4 conserved Cys residues that form 2 disulfide bonds in the mitochondrial intermembrane space. However, during the transit of TIM8 from cytoplasm into mitochondrion, the Cys residues probably coordinate zinc, thereby preventing folding and allowing its transfer across mitochondrial outer membrane (By similarity).</text>
</comment>
<comment type="similarity">
    <text evidence="2">Belongs to the small Tim family.</text>
</comment>
<name>TIM8_DEBHA</name>
<sequence length="90" mass="10050">MSQISQTALASLDESSRKDIMQFIESENSKSKVQMSIHNFTDMCFKKCNANKPITSGTLDSSEEQCLTNCLNRFLDTNIKVVQALQGAQK</sequence>
<proteinExistence type="inferred from homology"/>
<reference key="1">
    <citation type="journal article" date="2004" name="Nature">
        <title>Genome evolution in yeasts.</title>
        <authorList>
            <person name="Dujon B."/>
            <person name="Sherman D."/>
            <person name="Fischer G."/>
            <person name="Durrens P."/>
            <person name="Casaregola S."/>
            <person name="Lafontaine I."/>
            <person name="de Montigny J."/>
            <person name="Marck C."/>
            <person name="Neuveglise C."/>
            <person name="Talla E."/>
            <person name="Goffard N."/>
            <person name="Frangeul L."/>
            <person name="Aigle M."/>
            <person name="Anthouard V."/>
            <person name="Babour A."/>
            <person name="Barbe V."/>
            <person name="Barnay S."/>
            <person name="Blanchin S."/>
            <person name="Beckerich J.-M."/>
            <person name="Beyne E."/>
            <person name="Bleykasten C."/>
            <person name="Boisrame A."/>
            <person name="Boyer J."/>
            <person name="Cattolico L."/>
            <person name="Confanioleri F."/>
            <person name="de Daruvar A."/>
            <person name="Despons L."/>
            <person name="Fabre E."/>
            <person name="Fairhead C."/>
            <person name="Ferry-Dumazet H."/>
            <person name="Groppi A."/>
            <person name="Hantraye F."/>
            <person name="Hennequin C."/>
            <person name="Jauniaux N."/>
            <person name="Joyet P."/>
            <person name="Kachouri R."/>
            <person name="Kerrest A."/>
            <person name="Koszul R."/>
            <person name="Lemaire M."/>
            <person name="Lesur I."/>
            <person name="Ma L."/>
            <person name="Muller H."/>
            <person name="Nicaud J.-M."/>
            <person name="Nikolski M."/>
            <person name="Oztas S."/>
            <person name="Ozier-Kalogeropoulos O."/>
            <person name="Pellenz S."/>
            <person name="Potier S."/>
            <person name="Richard G.-F."/>
            <person name="Straub M.-L."/>
            <person name="Suleau A."/>
            <person name="Swennen D."/>
            <person name="Tekaia F."/>
            <person name="Wesolowski-Louvel M."/>
            <person name="Westhof E."/>
            <person name="Wirth B."/>
            <person name="Zeniou-Meyer M."/>
            <person name="Zivanovic Y."/>
            <person name="Bolotin-Fukuhara M."/>
            <person name="Thierry A."/>
            <person name="Bouchier C."/>
            <person name="Caudron B."/>
            <person name="Scarpelli C."/>
            <person name="Gaillardin C."/>
            <person name="Weissenbach J."/>
            <person name="Wincker P."/>
            <person name="Souciet J.-L."/>
        </authorList>
    </citation>
    <scope>NUCLEOTIDE SEQUENCE [LARGE SCALE GENOMIC DNA]</scope>
    <source>
        <strain>ATCC 36239 / CBS 767 / BCRC 21394 / JCM 1990 / NBRC 0083 / IGC 2968</strain>
    </source>
</reference>
<protein>
    <recommendedName>
        <fullName>Mitochondrial import inner membrane translocase subunit TIM8</fullName>
    </recommendedName>
</protein>
<accession>Q6BN23</accession>